<accession>Q0P5H9</accession>
<keyword id="KW-0963">Cytoplasm</keyword>
<keyword id="KW-0968">Cytoplasmic vesicle</keyword>
<keyword id="KW-0227">DNA damage</keyword>
<keyword id="KW-0234">DNA repair</keyword>
<keyword id="KW-0496">Mitochondrion</keyword>
<keyword id="KW-0539">Nucleus</keyword>
<keyword id="KW-0597">Phosphoprotein</keyword>
<keyword id="KW-1185">Reference proteome</keyword>
<keyword id="KW-0677">Repeat</keyword>
<keyword id="KW-0802">TPR repeat</keyword>
<name>TTC5_BOVIN</name>
<proteinExistence type="evidence at transcript level"/>
<reference key="1">
    <citation type="submission" date="2006-08" db="EMBL/GenBank/DDBJ databases">
        <authorList>
            <consortium name="NIH - Mammalian Gene Collection (MGC) project"/>
        </authorList>
    </citation>
    <scope>NUCLEOTIDE SEQUENCE [LARGE SCALE MRNA]</scope>
    <source>
        <strain>Hereford</strain>
        <tissue>Fetal pons</tissue>
    </source>
</reference>
<evidence type="ECO:0000250" key="1">
    <source>
        <dbReference type="UniProtKB" id="Q8N0Z6"/>
    </source>
</evidence>
<evidence type="ECO:0000250" key="2">
    <source>
        <dbReference type="UniProtKB" id="Q99LG4"/>
    </source>
</evidence>
<sequence length="440" mass="48918">MMAVEEEEVKEVLQKLQELVDQLYSFRECYFETHSVDDAGRKQQDVREEMEKTLQQMEEVVGSVQGNAQVLMLTGKALNVTPDYSPKAEELLSKAVKLEPKLVEAWNQLGEVYWKKGDVAAAHTCFSGALTHCKNKVSLQNLSMVLRQLRTDSGDEHSRHVMDSVRQAKLAVQMDILDGRSWYILGNAYLSLYFNTGQNPKISQQALSAYAQAEKVDRTASSNPDLHLNRATLHKYEENYGEALEGFSRAAALDPAWPEPWQREQQLLDFLTRLTSFLESKGKVKTKKLQSMLGNLRPAHLGPCGDGRYQSASGQKVTLERKPLNALQPGVNSGAVVLGKVVFSLTTEEKVPFTFGLVDSDGPCYAVMVYNMVQSWGVLIGDSVAIPEPNLRLHRIQHKGKDYSFSSVRVETPLLLVVNGKPQGSSSQAAATVASRPQCE</sequence>
<organism>
    <name type="scientific">Bos taurus</name>
    <name type="common">Bovine</name>
    <dbReference type="NCBI Taxonomy" id="9913"/>
    <lineage>
        <taxon>Eukaryota</taxon>
        <taxon>Metazoa</taxon>
        <taxon>Chordata</taxon>
        <taxon>Craniata</taxon>
        <taxon>Vertebrata</taxon>
        <taxon>Euteleostomi</taxon>
        <taxon>Mammalia</taxon>
        <taxon>Eutheria</taxon>
        <taxon>Laurasiatheria</taxon>
        <taxon>Artiodactyla</taxon>
        <taxon>Ruminantia</taxon>
        <taxon>Pecora</taxon>
        <taxon>Bovidae</taxon>
        <taxon>Bovinae</taxon>
        <taxon>Bos</taxon>
    </lineage>
</organism>
<protein>
    <recommendedName>
        <fullName evidence="1">Tetratricopeptide repeat protein 5</fullName>
        <shortName evidence="1">TPR repeat protein 5</shortName>
    </recommendedName>
    <alternativeName>
        <fullName evidence="2">Stress-responsive activator of p300</fullName>
        <shortName evidence="2">Protein Strap</shortName>
    </alternativeName>
</protein>
<comment type="function">
    <text evidence="1 2">Cofactor involved in the regulation of various cellular mechanisms such as actin regulation, autophagy, chromatin regulation and DNA repair. In physiological conditions, interacts with cofactor JMY in the cytoplasm which prevents JMY's actin nucleation activity and ability to activate the Arp2/3 complex. Acts as a negative regulator of nutrient stress-induced autophagy by inhibiting JMY's interaction with MAP1LC3B, thereby preventing autophagosome formation (By similarity). Involves in tubulin autoregulation by promoting its degradation in response to excess soluble tubulin. To do so, associates with the active ribosome near the ribosome exit tunnel and with nascent tubulin polypeptides early during their translation, triggering tubulin mRNA-targeted degradation (By similarity). Following DNA damage, phosphorylated by DNA damage responsive protein kinases ATM and CHEK2, leading to its nuclear accumulation and stability. Nuclear TTC5/STRAP promotes the assembly of a stress-responsive p53/TP53 coactivator complex, which includes the coactivators JMY and p300, thereby increasing p53/TP53-dependent transcription and apoptosis. Also recruits arginine methyltransferase PRMT5 to p53/TP53 when DNA is damaged, allowing PRMT5 to methylate p53/TP53. In DNA stress conditions, also prevents p53/TP53 degradation by E3 ubiquitin ligase MDM2. Upon heat-shock stress, forms a chromatin-associated complex with heat-shock factor 1 HSF1 and p300/EP300 to stimulate heat-shock-responsive transcription, thereby increasing cell survival. Mitochondrial TTC5/STRAP interacts with ATP synthase subunit beta ATP5F1B which decreased ATP synthase activity and lowers mitochondrial ATP production, thereby regulating cellular respiration and mitochondrial-dependent apoptosis. Mitochondrial TTC5/STRAP also regulates p53/TP53-mediated apoptosis (By similarity).</text>
</comment>
<comment type="subunit">
    <text evidence="1 2">Interacts with JMY and p300/EP300; the interaction occurs in the nucleus and augments the association between JMY and p300/EP300 in response to DNA damage. Interacts with PRMT5; the interaction is DNA damage-dependent and promotes PRMT5 interaction with p53/TP53 and subsequent methylation. Forms a complex with HSF1 and p300/EP300; these interactions augment chromatin-bound HSF1 and p300/EP300 histone acetyltransferase activity, resulting in enhanced heat-shock-responsive transcription. Interacts with JMY; the interaction occurs in the cytoplasm and results in the inhibition of JYM's nucleation activity (By similarity). Interacts with ribosome-coding tubulin (via 60S subunit 28S rRNA and protein uL24/RPL26) and the N-terminal of nascent tubulin polypeptide (via alpha-tubulin MREC motif and beta-tubulin MREI motif); these interactions result in tubulin mRNA-targeted degradation (By similarity). Interacts with ATP5F1B; the interaction occurs in the mitochondria and results in ATP production decrease. Interacts with p53/TP53; the interaction occurs in the mitochondria and results in increased apoptosis (By similarity).</text>
</comment>
<comment type="subcellular location">
    <subcellularLocation>
        <location evidence="2">Nucleus</location>
    </subcellularLocation>
    <subcellularLocation>
        <location evidence="2">Cytoplasm</location>
    </subcellularLocation>
    <subcellularLocation>
        <location evidence="2">Cytoplasmic vesicle</location>
    </subcellularLocation>
    <subcellularLocation>
        <location evidence="2">Mitochondrion matrix</location>
    </subcellularLocation>
    <text evidence="2">Phosphorylation at Ser-203 results in nuclear localization, while unphosphorylated protein localizes to the cytoplasm. Nuclear localization may be necessary for DNA damage-dependent stabilization of the protein.</text>
</comment>
<comment type="domain">
    <text evidence="2">The tetratricopep-repeat (TPR) motifs may function as protein interaction domains.</text>
</comment>
<comment type="PTM">
    <text evidence="2">Phosphorylation by ATM kinase induces nuclear accumulation while interfering with nuclear export, and phosphorylation by CHEK2 kinase enhances nuclear stability.</text>
</comment>
<feature type="chain" id="PRO_0000324615" description="Tetratricopeptide repeat protein 5">
    <location>
        <begin position="1"/>
        <end position="440"/>
    </location>
</feature>
<feature type="repeat" description="TPR 1">
    <location>
        <begin position="7"/>
        <end position="61"/>
    </location>
</feature>
<feature type="repeat" description="TPR 2">
    <location>
        <begin position="68"/>
        <end position="98"/>
    </location>
</feature>
<feature type="repeat" description="TPR 3">
    <location>
        <begin position="103"/>
        <end position="130"/>
    </location>
</feature>
<feature type="repeat" description="TPR 4">
    <location>
        <begin position="136"/>
        <end position="174"/>
    </location>
</feature>
<feature type="repeat" description="TPR 5">
    <location>
        <begin position="179"/>
        <end position="216"/>
    </location>
</feature>
<feature type="repeat" description="TPR 6">
    <location>
        <begin position="224"/>
        <end position="253"/>
    </location>
</feature>
<feature type="region of interest" description="Mediates interaction with 28S rRNA of ribosome-coding tubulin" evidence="1">
    <location>
        <begin position="285"/>
        <end position="287"/>
    </location>
</feature>
<feature type="short sequence motif" description="Nuclear export signal" evidence="2">
    <location>
        <begin position="13"/>
        <end position="24"/>
    </location>
</feature>
<feature type="site" description="Mediates interaction with N-terminal MREI motif of beta-tubulin nascent chain" evidence="1">
    <location>
        <position position="147"/>
    </location>
</feature>
<feature type="site" description="Mediates interaction with N-terminal MREI motif of beta-tubulin nascent chain" evidence="1">
    <location>
        <position position="225"/>
    </location>
</feature>
<feature type="site" description="Mediates interaction with N-terminal MREI motif of beta-tubulin nascent chain" evidence="1">
    <location>
        <position position="259"/>
    </location>
</feature>
<feature type="modified residue" description="Phosphoserine; by ATM" evidence="2">
    <location>
        <position position="203"/>
    </location>
</feature>
<feature type="modified residue" description="Phosphoserine; by CHEK2" evidence="2">
    <location>
        <position position="221"/>
    </location>
</feature>
<dbReference type="EMBL" id="BC120007">
    <property type="protein sequence ID" value="AAI20008.1"/>
    <property type="molecule type" value="mRNA"/>
</dbReference>
<dbReference type="RefSeq" id="NP_001068932.1">
    <property type="nucleotide sequence ID" value="NM_001075464.2"/>
</dbReference>
<dbReference type="SMR" id="Q0P5H9"/>
<dbReference type="FunCoup" id="Q0P5H9">
    <property type="interactions" value="4518"/>
</dbReference>
<dbReference type="STRING" id="9913.ENSBTAP00000036097"/>
<dbReference type="PaxDb" id="9913-ENSBTAP00000036097"/>
<dbReference type="GeneID" id="510757"/>
<dbReference type="KEGG" id="bta:510757"/>
<dbReference type="CTD" id="91875"/>
<dbReference type="VEuPathDB" id="HostDB:ENSBTAG00000009372"/>
<dbReference type="eggNOG" id="ENOG502QQ6C">
    <property type="taxonomic scope" value="Eukaryota"/>
</dbReference>
<dbReference type="HOGENOM" id="CLU_026886_2_1_1"/>
<dbReference type="InParanoid" id="Q0P5H9"/>
<dbReference type="OMA" id="DECKGYE"/>
<dbReference type="OrthoDB" id="423589at2759"/>
<dbReference type="TreeFam" id="TF316804"/>
<dbReference type="Reactome" id="R-BTA-6804760">
    <property type="pathway name" value="Regulation of TP53 Activity through Methylation"/>
</dbReference>
<dbReference type="Proteomes" id="UP000009136">
    <property type="component" value="Chromosome 10"/>
</dbReference>
<dbReference type="Bgee" id="ENSBTAG00000009372">
    <property type="expression patterns" value="Expressed in oocyte and 107 other cell types or tissues"/>
</dbReference>
<dbReference type="GO" id="GO:0031410">
    <property type="term" value="C:cytoplasmic vesicle"/>
    <property type="evidence" value="ECO:0000250"/>
    <property type="project" value="UniProtKB"/>
</dbReference>
<dbReference type="GO" id="GO:0005829">
    <property type="term" value="C:cytosol"/>
    <property type="evidence" value="ECO:0000250"/>
    <property type="project" value="UniProtKB"/>
</dbReference>
<dbReference type="GO" id="GO:0005759">
    <property type="term" value="C:mitochondrial matrix"/>
    <property type="evidence" value="ECO:0007669"/>
    <property type="project" value="UniProtKB-SubCell"/>
</dbReference>
<dbReference type="GO" id="GO:0005739">
    <property type="term" value="C:mitochondrion"/>
    <property type="evidence" value="ECO:0000250"/>
    <property type="project" value="UniProtKB"/>
</dbReference>
<dbReference type="GO" id="GO:0005634">
    <property type="term" value="C:nucleus"/>
    <property type="evidence" value="ECO:0000250"/>
    <property type="project" value="UniProtKB"/>
</dbReference>
<dbReference type="GO" id="GO:0009267">
    <property type="term" value="P:cellular response to starvation"/>
    <property type="evidence" value="ECO:0000250"/>
    <property type="project" value="UniProtKB"/>
</dbReference>
<dbReference type="GO" id="GO:0006974">
    <property type="term" value="P:DNA damage response"/>
    <property type="evidence" value="ECO:0000250"/>
    <property type="project" value="UniProtKB"/>
</dbReference>
<dbReference type="GO" id="GO:0006281">
    <property type="term" value="P:DNA repair"/>
    <property type="evidence" value="ECO:0007669"/>
    <property type="project" value="UniProtKB-KW"/>
</dbReference>
<dbReference type="FunFam" id="1.25.40.10:FF:000194">
    <property type="entry name" value="Tetratricopeptide repeat domain 5"/>
    <property type="match status" value="1"/>
</dbReference>
<dbReference type="FunFam" id="2.40.50.550:FF:000001">
    <property type="entry name" value="Tetratricopeptide repeat domain 5"/>
    <property type="match status" value="1"/>
</dbReference>
<dbReference type="Gene3D" id="2.40.50.550">
    <property type="match status" value="1"/>
</dbReference>
<dbReference type="Gene3D" id="1.25.40.10">
    <property type="entry name" value="Tetratricopeptide repeat domain"/>
    <property type="match status" value="1"/>
</dbReference>
<dbReference type="InterPro" id="IPR011990">
    <property type="entry name" value="TPR-like_helical_dom_sf"/>
</dbReference>
<dbReference type="InterPro" id="IPR019734">
    <property type="entry name" value="TPR_rpt"/>
</dbReference>
<dbReference type="InterPro" id="IPR032076">
    <property type="entry name" value="TTC5_OB"/>
</dbReference>
<dbReference type="InterPro" id="IPR038645">
    <property type="entry name" value="TTC5_OB_sf"/>
</dbReference>
<dbReference type="PANTHER" id="PTHR26312">
    <property type="entry name" value="TETRATRICOPEPTIDE REPEAT PROTEIN 5"/>
    <property type="match status" value="1"/>
</dbReference>
<dbReference type="PANTHER" id="PTHR26312:SF87">
    <property type="entry name" value="TETRATRICOPEPTIDE REPEAT PROTEIN 5"/>
    <property type="match status" value="1"/>
</dbReference>
<dbReference type="Pfam" id="PF16669">
    <property type="entry name" value="TTC5_OB"/>
    <property type="match status" value="1"/>
</dbReference>
<dbReference type="SMART" id="SM00028">
    <property type="entry name" value="TPR"/>
    <property type="match status" value="2"/>
</dbReference>
<dbReference type="SUPFAM" id="SSF48452">
    <property type="entry name" value="TPR-like"/>
    <property type="match status" value="1"/>
</dbReference>
<dbReference type="PROSITE" id="PS50005">
    <property type="entry name" value="TPR"/>
    <property type="match status" value="2"/>
</dbReference>
<dbReference type="PROSITE" id="PS50293">
    <property type="entry name" value="TPR_REGION"/>
    <property type="match status" value="2"/>
</dbReference>
<gene>
    <name type="primary">TTC5</name>
</gene>